<sequence length="663" mass="72418">MSHQILLLLAMLTLGLAISQRREQVPCRTVNKEALCHGLGLLQVPSVLSLDIQALYLSGNQLQSILVSPLGFYTALRHLDLSDNQISFLQAGVFQALPYLEHLNLAHNRLATGMALNSGGLGRLPLLVSLDLSGNSLHGNLVERLLGETPRLRTLSLAENSLTRLARHTFWGMPAVEQLDLHSNVLMDIEDGAFEALPHLTHLNLSRNSLTCISDFSLQQLQVLDLSCNSIEAFQTAPEPQAQFQLAWLDLRENKLLHFPDLAVFPRLIYLNVSNNLIQLPAGLPRGSEDLHAPSEGWSASPLSNPSRNASTHPLSQLLNLDLSYNEIELVPASFLEHLTSLRFLNLSRNCLRSFEARQVDSLPCLVLLDLSHNVLEALELGTKVLGSLQTLLLQDNALQELPPYTFASLASLQRLNLQGNQVSPCGGPAEPGPPGCVDFSGIPTLHVLNMAGNSMGMLRAGSFLHTPLTELDLSTNPGLDVATGALVGLEASLEVLELQGNGLTVLRVDLPCFLRLKRLNLAENQLSHLPAWTRAVSLEVLDLRNNSFSLLPGNAMGGLETSLRRLYLQGNPLSCCGNGWLAAQLHQGRVDVDATQDLICRFGSQEELSLSLVRPEDCEKGGLKNVNLILLLSFTLVSAIVLTTLATICFLRRQKLSQQYKA</sequence>
<name>LRC32_MOUSE</name>
<organism>
    <name type="scientific">Mus musculus</name>
    <name type="common">Mouse</name>
    <dbReference type="NCBI Taxonomy" id="10090"/>
    <lineage>
        <taxon>Eukaryota</taxon>
        <taxon>Metazoa</taxon>
        <taxon>Chordata</taxon>
        <taxon>Craniata</taxon>
        <taxon>Vertebrata</taxon>
        <taxon>Euteleostomi</taxon>
        <taxon>Mammalia</taxon>
        <taxon>Eutheria</taxon>
        <taxon>Euarchontoglires</taxon>
        <taxon>Glires</taxon>
        <taxon>Rodentia</taxon>
        <taxon>Myomorpha</taxon>
        <taxon>Muroidea</taxon>
        <taxon>Muridae</taxon>
        <taxon>Murinae</taxon>
        <taxon>Mus</taxon>
        <taxon>Mus</taxon>
    </lineage>
</organism>
<evidence type="ECO:0000250" key="1">
    <source>
        <dbReference type="UniProtKB" id="Q14392"/>
    </source>
</evidence>
<evidence type="ECO:0000255" key="2"/>
<evidence type="ECO:0000256" key="3">
    <source>
        <dbReference type="SAM" id="MobiDB-lite"/>
    </source>
</evidence>
<evidence type="ECO:0000269" key="4">
    <source>
    </source>
</evidence>
<evidence type="ECO:0000269" key="5">
    <source>
    </source>
</evidence>
<evidence type="ECO:0000303" key="6">
    <source>
    </source>
</evidence>
<evidence type="ECO:0000305" key="7"/>
<evidence type="ECO:0000312" key="8">
    <source>
        <dbReference type="MGI" id="MGI:93882"/>
    </source>
</evidence>
<proteinExistence type="evidence at protein level"/>
<dbReference type="EMBL" id="AC115069">
    <property type="status" value="NOT_ANNOTATED_CDS"/>
    <property type="molecule type" value="Genomic_DNA"/>
</dbReference>
<dbReference type="EMBL" id="CH466531">
    <property type="protein sequence ID" value="EDL16346.1"/>
    <property type="molecule type" value="Genomic_DNA"/>
</dbReference>
<dbReference type="CCDS" id="CCDS52319.1"/>
<dbReference type="RefSeq" id="NP_001106850.1">
    <property type="nucleotide sequence ID" value="NM_001113379.2"/>
</dbReference>
<dbReference type="RefSeq" id="XP_006508040.1">
    <property type="nucleotide sequence ID" value="XM_006507977.1"/>
</dbReference>
<dbReference type="RefSeq" id="XP_006508041.1">
    <property type="nucleotide sequence ID" value="XM_006507978.4"/>
</dbReference>
<dbReference type="RefSeq" id="XP_006508042.1">
    <property type="nucleotide sequence ID" value="XM_006507979.4"/>
</dbReference>
<dbReference type="SMR" id="G3XA59"/>
<dbReference type="FunCoup" id="G3XA59">
    <property type="interactions" value="219"/>
</dbReference>
<dbReference type="STRING" id="10090.ENSMUSP00000145859"/>
<dbReference type="GlyCosmos" id="G3XA59">
    <property type="glycosylation" value="6 sites, No reported glycans"/>
</dbReference>
<dbReference type="GlyGen" id="G3XA59">
    <property type="glycosylation" value="6 sites, 2 N-linked glycans (2 sites)"/>
</dbReference>
<dbReference type="PhosphoSitePlus" id="G3XA59"/>
<dbReference type="PaxDb" id="10090-ENSMUSP00000133205"/>
<dbReference type="PeptideAtlas" id="G3XA59"/>
<dbReference type="ProteomicsDB" id="337412"/>
<dbReference type="Antibodypedia" id="45130">
    <property type="antibodies" value="337 antibodies from 30 providers"/>
</dbReference>
<dbReference type="Ensembl" id="ENSMUST00000165205.2">
    <property type="protein sequence ID" value="ENSMUSP00000133205.2"/>
    <property type="gene ID" value="ENSMUSG00000090958.3"/>
</dbReference>
<dbReference type="Ensembl" id="ENSMUST00000205956.2">
    <property type="protein sequence ID" value="ENSMUSP00000145859.2"/>
    <property type="gene ID" value="ENSMUSG00000090958.3"/>
</dbReference>
<dbReference type="GeneID" id="434215"/>
<dbReference type="KEGG" id="mmu:434215"/>
<dbReference type="UCSC" id="uc012fpt.1">
    <property type="organism name" value="mouse"/>
</dbReference>
<dbReference type="AGR" id="MGI:93882"/>
<dbReference type="CTD" id="2615"/>
<dbReference type="MGI" id="MGI:93882">
    <property type="gene designation" value="Lrrc32"/>
</dbReference>
<dbReference type="VEuPathDB" id="HostDB:ENSMUSG00000090958"/>
<dbReference type="eggNOG" id="KOG0619">
    <property type="taxonomic scope" value="Eukaryota"/>
</dbReference>
<dbReference type="GeneTree" id="ENSGT00940000162288"/>
<dbReference type="HOGENOM" id="CLU_024194_1_0_1"/>
<dbReference type="InParanoid" id="G3XA59"/>
<dbReference type="OMA" id="CIRRQKF"/>
<dbReference type="OrthoDB" id="8195690at2759"/>
<dbReference type="PhylomeDB" id="G3XA59"/>
<dbReference type="TreeFam" id="TF317167"/>
<dbReference type="BioGRID-ORCS" id="434215">
    <property type="hits" value="1 hit in 78 CRISPR screens"/>
</dbReference>
<dbReference type="ChiTaRS" id="Lrrc32">
    <property type="organism name" value="mouse"/>
</dbReference>
<dbReference type="PRO" id="PR:G3XA59"/>
<dbReference type="Proteomes" id="UP000000589">
    <property type="component" value="Chromosome 7"/>
</dbReference>
<dbReference type="RNAct" id="G3XA59">
    <property type="molecule type" value="protein"/>
</dbReference>
<dbReference type="Bgee" id="ENSMUSG00000090958">
    <property type="expression patterns" value="Expressed in lung and 85 other cell types or tissues"/>
</dbReference>
<dbReference type="ExpressionAtlas" id="G3XA59">
    <property type="expression patterns" value="baseline and differential"/>
</dbReference>
<dbReference type="GO" id="GO:0009986">
    <property type="term" value="C:cell surface"/>
    <property type="evidence" value="ECO:0000250"/>
    <property type="project" value="UniProtKB"/>
</dbReference>
<dbReference type="GO" id="GO:0005654">
    <property type="term" value="C:nucleoplasm"/>
    <property type="evidence" value="ECO:0007669"/>
    <property type="project" value="Ensembl"/>
</dbReference>
<dbReference type="GO" id="GO:0005886">
    <property type="term" value="C:plasma membrane"/>
    <property type="evidence" value="ECO:0007669"/>
    <property type="project" value="UniProtKB-SubCell"/>
</dbReference>
<dbReference type="GO" id="GO:0141069">
    <property type="term" value="F:receptor ligand inhibitor activity"/>
    <property type="evidence" value="ECO:0007669"/>
    <property type="project" value="Ensembl"/>
</dbReference>
<dbReference type="GO" id="GO:0050431">
    <property type="term" value="F:transforming growth factor beta binding"/>
    <property type="evidence" value="ECO:0000353"/>
    <property type="project" value="UniProtKB"/>
</dbReference>
<dbReference type="GO" id="GO:0035592">
    <property type="term" value="P:establishment of protein localization to extracellular region"/>
    <property type="evidence" value="ECO:0000314"/>
    <property type="project" value="UniProtKB"/>
</dbReference>
<dbReference type="GO" id="GO:0046007">
    <property type="term" value="P:negative regulation of activated T cell proliferation"/>
    <property type="evidence" value="ECO:0000314"/>
    <property type="project" value="MGI"/>
</dbReference>
<dbReference type="GO" id="GO:0001818">
    <property type="term" value="P:negative regulation of cytokine production"/>
    <property type="evidence" value="ECO:0000314"/>
    <property type="project" value="MGI"/>
</dbReference>
<dbReference type="GO" id="GO:0010628">
    <property type="term" value="P:positive regulation of gene expression"/>
    <property type="evidence" value="ECO:0000314"/>
    <property type="project" value="MGI"/>
</dbReference>
<dbReference type="GO" id="GO:0062009">
    <property type="term" value="P:secondary palate development"/>
    <property type="evidence" value="ECO:0000315"/>
    <property type="project" value="UniProtKB"/>
</dbReference>
<dbReference type="GO" id="GO:0007179">
    <property type="term" value="P:transforming growth factor beta receptor signaling pathway"/>
    <property type="evidence" value="ECO:0000250"/>
    <property type="project" value="UniProtKB"/>
</dbReference>
<dbReference type="FunFam" id="3.80.10.10:FF:000226">
    <property type="entry name" value="leucine-rich repeat-containing protein 32 isoform X1"/>
    <property type="match status" value="1"/>
</dbReference>
<dbReference type="FunFam" id="3.80.10.10:FF:000397">
    <property type="entry name" value="Transforming growth factor beta activator LRRC32"/>
    <property type="match status" value="1"/>
</dbReference>
<dbReference type="FunFam" id="3.80.10.10:FF:000482">
    <property type="entry name" value="Transforming growth factor beta activator LRRC32"/>
    <property type="match status" value="1"/>
</dbReference>
<dbReference type="Gene3D" id="3.80.10.10">
    <property type="entry name" value="Ribonuclease Inhibitor"/>
    <property type="match status" value="4"/>
</dbReference>
<dbReference type="InterPro" id="IPR001611">
    <property type="entry name" value="Leu-rich_rpt"/>
</dbReference>
<dbReference type="InterPro" id="IPR003591">
    <property type="entry name" value="Leu-rich_rpt_typical-subtyp"/>
</dbReference>
<dbReference type="InterPro" id="IPR032675">
    <property type="entry name" value="LRR_dom_sf"/>
</dbReference>
<dbReference type="PANTHER" id="PTHR45617">
    <property type="entry name" value="LEUCINE RICH REPEAT FAMILY PROTEIN"/>
    <property type="match status" value="1"/>
</dbReference>
<dbReference type="PANTHER" id="PTHR45617:SF181">
    <property type="entry name" value="LP04042P"/>
    <property type="match status" value="1"/>
</dbReference>
<dbReference type="Pfam" id="PF13855">
    <property type="entry name" value="LRR_8"/>
    <property type="match status" value="5"/>
</dbReference>
<dbReference type="SMART" id="SM00364">
    <property type="entry name" value="LRR_BAC"/>
    <property type="match status" value="8"/>
</dbReference>
<dbReference type="SMART" id="SM00368">
    <property type="entry name" value="LRR_RI"/>
    <property type="match status" value="3"/>
</dbReference>
<dbReference type="SMART" id="SM00369">
    <property type="entry name" value="LRR_TYP"/>
    <property type="match status" value="14"/>
</dbReference>
<dbReference type="SUPFAM" id="SSF52058">
    <property type="entry name" value="L domain-like"/>
    <property type="match status" value="2"/>
</dbReference>
<dbReference type="PROSITE" id="PS51450">
    <property type="entry name" value="LRR"/>
    <property type="match status" value="20"/>
</dbReference>
<accession>G3XA59</accession>
<accession>A0A0U1RQ93</accession>
<reference key="1">
    <citation type="journal article" date="2009" name="PLoS Biol.">
        <title>Lineage-specific biology revealed by a finished genome assembly of the mouse.</title>
        <authorList>
            <person name="Church D.M."/>
            <person name="Goodstadt L."/>
            <person name="Hillier L.W."/>
            <person name="Zody M.C."/>
            <person name="Goldstein S."/>
            <person name="She X."/>
            <person name="Bult C.J."/>
            <person name="Agarwala R."/>
            <person name="Cherry J.L."/>
            <person name="DiCuccio M."/>
            <person name="Hlavina W."/>
            <person name="Kapustin Y."/>
            <person name="Meric P."/>
            <person name="Maglott D."/>
            <person name="Birtle Z."/>
            <person name="Marques A.C."/>
            <person name="Graves T."/>
            <person name="Zhou S."/>
            <person name="Teague B."/>
            <person name="Potamousis K."/>
            <person name="Churas C."/>
            <person name="Place M."/>
            <person name="Herschleb J."/>
            <person name="Runnheim R."/>
            <person name="Forrest D."/>
            <person name="Amos-Landgraf J."/>
            <person name="Schwartz D.C."/>
            <person name="Cheng Z."/>
            <person name="Lindblad-Toh K."/>
            <person name="Eichler E.E."/>
            <person name="Ponting C.P."/>
        </authorList>
    </citation>
    <scope>NUCLEOTIDE SEQUENCE [LARGE SCALE GENOMIC DNA]</scope>
    <source>
        <strain>C57BL/6J</strain>
    </source>
</reference>
<reference key="2">
    <citation type="submission" date="2005-07" db="EMBL/GenBank/DDBJ databases">
        <authorList>
            <person name="Mural R.J."/>
            <person name="Adams M.D."/>
            <person name="Myers E.W."/>
            <person name="Smith H.O."/>
            <person name="Venter J.C."/>
        </authorList>
    </citation>
    <scope>NUCLEOTIDE SEQUENCE [LARGE SCALE GENOMIC DNA]</scope>
</reference>
<reference key="3">
    <citation type="journal article" date="2014" name="J. Immunol.">
        <title>Release of active TGF-beta1 from the latent TGF-beta1/GARP complex on T regulatory cells is mediated by integrin beta8.</title>
        <authorList>
            <person name="Edwards J.P."/>
            <person name="Thornton A.M."/>
            <person name="Shevach E.M."/>
        </authorList>
    </citation>
    <scope>FUNCTION</scope>
</reference>
<reference key="4">
    <citation type="journal article" date="2017" name="J. Biol. Chem.">
        <title>Glycoprotein A repetitions predominant (GARP) positively regulates transforming growth factor (TGF) beta3 and is essential for mouse palatogenesis.</title>
        <authorList>
            <person name="Wu B.X."/>
            <person name="Li A."/>
            <person name="Lei L."/>
            <person name="Kaneko S."/>
            <person name="Wallace C."/>
            <person name="Li X."/>
            <person name="Li Z."/>
        </authorList>
    </citation>
    <scope>FUNCTION</scope>
    <scope>INTERACTION WITH TGFB3</scope>
    <scope>DISRUPTION PHENOTYPE</scope>
    <scope>TISSUE SPECIFICITY</scope>
</reference>
<comment type="function">
    <text evidence="1 4 5">Key regulator of transforming growth factor beta (TGFB1, TGFB2 and TGFB3) that controls TGF-beta activation by maintaining it in a latent state during storage in extracellular space (PubMed:25127859). Associates specifically via disulfide bonds with the Latency-associated peptide (LAP), which is the regulatory chain of TGF-beta, and regulates integrin-dependent activation of TGF-beta (PubMed:25127859, PubMed:28912269). Able to outcompete LTBP1 for binding to LAP regulatory chain of TGF-beta (By similarity). Controls activation of TGF-beta-1 (TGFB1) on the surface of activated regulatory T-cells (Tregs) (PubMed:25127859). Required for epithelial fusion during palate development by regulating activation of TGF-beta-3 (TGFB3) (PubMed:28912269).</text>
</comment>
<comment type="subunit">
    <text evidence="1 5">Interacts with TGFB1; associates via disulfide bonds with the Latency-associated peptide chain (LAP) regulatory chain of TGFB1, leading to regulate activation of TGF-beta-1 (By similarity). Interacts with TGFB2 (By similarity). Interacts with TGFB3; associates via disulfide bonds with the Latency-associated peptide chain (LAP) regulatory chain of TGFB3, leading to regulate activation of TGF-beta-3 (PubMed:28912269). Interacts with LAPTM4B; decreases TGFB1 production in regulatory T-cells (By similarity).</text>
</comment>
<comment type="subcellular location">
    <subcellularLocation>
        <location evidence="1">Cell membrane</location>
        <topology evidence="2">Single-pass type I membrane protein</topology>
    </subcellularLocation>
    <subcellularLocation>
        <location evidence="1">Cell surface</location>
    </subcellularLocation>
</comment>
<comment type="tissue specificity">
    <text evidence="5">Present in medial edge epithelial cells at 14.5 dpc (at protein level).</text>
</comment>
<comment type="disruption phenotype">
    <text evidence="5">Lethality within 24 hours after birth (PubMed:28912269). Mice display defective palatogenesis without apparent abnormalities in other major organs (PubMed:28912269).</text>
</comment>
<comment type="similarity">
    <text evidence="7">Belongs to the LRRC32/LRRC33 family.</text>
</comment>
<protein>
    <recommendedName>
        <fullName evidence="7">Transforming growth factor beta activator LRRC32</fullName>
    </recommendedName>
    <alternativeName>
        <fullName evidence="1">Garpin</fullName>
    </alternativeName>
    <alternativeName>
        <fullName evidence="6">Glycoprotein A repetitions predominant</fullName>
        <shortName evidence="6">GARP</shortName>
    </alternativeName>
    <alternativeName>
        <fullName evidence="7">Leucine-rich repeat-containing protein 32</fullName>
    </alternativeName>
</protein>
<gene>
    <name evidence="8" type="primary">Lrrc32</name>
</gene>
<keyword id="KW-1003">Cell membrane</keyword>
<keyword id="KW-1015">Disulfide bond</keyword>
<keyword id="KW-0325">Glycoprotein</keyword>
<keyword id="KW-0340">Growth factor binding</keyword>
<keyword id="KW-0433">Leucine-rich repeat</keyword>
<keyword id="KW-0472">Membrane</keyword>
<keyword id="KW-1185">Reference proteome</keyword>
<keyword id="KW-0677">Repeat</keyword>
<keyword id="KW-0732">Signal</keyword>
<keyword id="KW-0812">Transmembrane</keyword>
<keyword id="KW-1133">Transmembrane helix</keyword>
<feature type="signal peptide" evidence="2">
    <location>
        <begin position="1"/>
        <end position="17"/>
    </location>
</feature>
<feature type="chain" id="PRO_0000445577" description="Transforming growth factor beta activator LRRC32" evidence="2">
    <location>
        <begin position="18"/>
        <end position="663"/>
    </location>
</feature>
<feature type="topological domain" description="Extracellular" evidence="7">
    <location>
        <begin position="18"/>
        <end position="628"/>
    </location>
</feature>
<feature type="transmembrane region" description="Helical" evidence="2">
    <location>
        <begin position="629"/>
        <end position="649"/>
    </location>
</feature>
<feature type="topological domain" description="Cytoplasmic" evidence="7">
    <location>
        <begin position="650"/>
        <end position="663"/>
    </location>
</feature>
<feature type="domain" description="LRRNT" evidence="2">
    <location>
        <begin position="22"/>
        <end position="49"/>
    </location>
</feature>
<feature type="repeat" description="LRR 1" evidence="2">
    <location>
        <begin position="49"/>
        <end position="72"/>
    </location>
</feature>
<feature type="repeat" description="LRR 2" evidence="2">
    <location>
        <begin position="73"/>
        <end position="96"/>
    </location>
</feature>
<feature type="repeat" description="LRR 3" evidence="2">
    <location>
        <begin position="98"/>
        <end position="123"/>
    </location>
</feature>
<feature type="repeat" description="LRR 4" evidence="2">
    <location>
        <begin position="125"/>
        <end position="148"/>
    </location>
</feature>
<feature type="repeat" description="LRR 5" evidence="2">
    <location>
        <begin position="149"/>
        <end position="172"/>
    </location>
</feature>
<feature type="repeat" description="LRR 6" evidence="2">
    <location>
        <begin position="174"/>
        <end position="196"/>
    </location>
</feature>
<feature type="repeat" description="LRR 7" evidence="2">
    <location>
        <begin position="197"/>
        <end position="220"/>
    </location>
</feature>
<feature type="repeat" description="LRR 8" evidence="2">
    <location>
        <begin position="222"/>
        <end position="241"/>
    </location>
</feature>
<feature type="repeat" description="LRR 9" evidence="2">
    <location>
        <begin position="243"/>
        <end position="267"/>
    </location>
</feature>
<feature type="repeat" description="LRR 10" evidence="2">
    <location>
        <begin position="269"/>
        <end position="287"/>
    </location>
</feature>
<feature type="repeat" description="LRR 11" evidence="2">
    <location>
        <begin position="315"/>
        <end position="338"/>
    </location>
</feature>
<feature type="repeat" description="LRR 12" evidence="2">
    <location>
        <begin position="340"/>
        <end position="362"/>
    </location>
</feature>
<feature type="repeat" description="LRR 13" evidence="2">
    <location>
        <begin position="363"/>
        <end position="386"/>
    </location>
</feature>
<feature type="repeat" description="LRR 14" evidence="2">
    <location>
        <begin position="387"/>
        <end position="409"/>
    </location>
</feature>
<feature type="repeat" description="LRR 15" evidence="2">
    <location>
        <begin position="411"/>
        <end position="433"/>
    </location>
</feature>
<feature type="repeat" description="LRR 16" evidence="2">
    <location>
        <begin position="443"/>
        <end position="466"/>
    </location>
</feature>
<feature type="repeat" description="LRR 17" evidence="2">
    <location>
        <begin position="468"/>
        <end position="489"/>
    </location>
</feature>
<feature type="repeat" description="LRR 18" evidence="2">
    <location>
        <begin position="491"/>
        <end position="514"/>
    </location>
</feature>
<feature type="repeat" description="LRR 19" evidence="2">
    <location>
        <begin position="515"/>
        <end position="539"/>
    </location>
</feature>
<feature type="repeat" description="LRR 20" evidence="2">
    <location>
        <begin position="541"/>
        <end position="559"/>
    </location>
</feature>
<feature type="repeat" description="LRR 21" evidence="2">
    <location>
        <begin position="561"/>
        <end position="584"/>
    </location>
</feature>
<feature type="domain" description="LRRCT" evidence="2">
    <location>
        <begin position="572"/>
        <end position="621"/>
    </location>
</feature>
<feature type="region of interest" description="Disordered" evidence="3">
    <location>
        <begin position="291"/>
        <end position="311"/>
    </location>
</feature>
<feature type="compositionally biased region" description="Polar residues" evidence="3">
    <location>
        <begin position="301"/>
        <end position="311"/>
    </location>
</feature>
<feature type="glycosylation site" description="N-linked (GlcNAc...) asparagine" evidence="2">
    <location>
        <position position="204"/>
    </location>
</feature>
<feature type="glycosylation site" description="N-linked (GlcNAc...) asparagine" evidence="2">
    <location>
        <position position="272"/>
    </location>
</feature>
<feature type="glycosylation site" description="N-linked (GlcNAc...) asparagine" evidence="2">
    <location>
        <position position="305"/>
    </location>
</feature>
<feature type="glycosylation site" description="N-linked (GlcNAc...) asparagine" evidence="2">
    <location>
        <position position="309"/>
    </location>
</feature>
<feature type="glycosylation site" description="N-linked (GlcNAc...) asparagine" evidence="2">
    <location>
        <position position="346"/>
    </location>
</feature>
<feature type="glycosylation site" description="N-linked (GlcNAc...) asparagine" evidence="2">
    <location>
        <position position="546"/>
    </location>
</feature>
<feature type="disulfide bond" description="Interchain (with C-33 in TGFB1); in linked form" evidence="1">
    <location>
        <position position="212"/>
    </location>
</feature>
<feature type="disulfide bond" description="Interchain (with C-33 in TGFB1); in linked form" evidence="1">
    <location>
        <position position="351"/>
    </location>
</feature>